<protein>
    <recommendedName>
        <fullName evidence="1">NADH-quinone oxidoreductase subunit I</fullName>
        <ecNumber evidence="1">7.1.1.-</ecNumber>
    </recommendedName>
    <alternativeName>
        <fullName evidence="1">NADH dehydrogenase I subunit I</fullName>
    </alternativeName>
    <alternativeName>
        <fullName evidence="1">NDH-1 subunit I</fullName>
    </alternativeName>
</protein>
<evidence type="ECO:0000255" key="1">
    <source>
        <dbReference type="HAMAP-Rule" id="MF_01351"/>
    </source>
</evidence>
<name>NUOI_HYPNA</name>
<dbReference type="EC" id="7.1.1.-" evidence="1"/>
<dbReference type="EMBL" id="CP000158">
    <property type="protein sequence ID" value="ABI76597.1"/>
    <property type="molecule type" value="Genomic_DNA"/>
</dbReference>
<dbReference type="RefSeq" id="WP_011646757.1">
    <property type="nucleotide sequence ID" value="NC_008358.1"/>
</dbReference>
<dbReference type="SMR" id="Q0C1D6"/>
<dbReference type="STRING" id="228405.HNE_1753"/>
<dbReference type="KEGG" id="hne:HNE_1753"/>
<dbReference type="eggNOG" id="COG1143">
    <property type="taxonomic scope" value="Bacteria"/>
</dbReference>
<dbReference type="HOGENOM" id="CLU_067218_5_1_5"/>
<dbReference type="Proteomes" id="UP000001959">
    <property type="component" value="Chromosome"/>
</dbReference>
<dbReference type="GO" id="GO:0005886">
    <property type="term" value="C:plasma membrane"/>
    <property type="evidence" value="ECO:0007669"/>
    <property type="project" value="UniProtKB-SubCell"/>
</dbReference>
<dbReference type="GO" id="GO:0051539">
    <property type="term" value="F:4 iron, 4 sulfur cluster binding"/>
    <property type="evidence" value="ECO:0007669"/>
    <property type="project" value="UniProtKB-KW"/>
</dbReference>
<dbReference type="GO" id="GO:0005506">
    <property type="term" value="F:iron ion binding"/>
    <property type="evidence" value="ECO:0007669"/>
    <property type="project" value="UniProtKB-UniRule"/>
</dbReference>
<dbReference type="GO" id="GO:0050136">
    <property type="term" value="F:NADH:ubiquinone reductase (non-electrogenic) activity"/>
    <property type="evidence" value="ECO:0007669"/>
    <property type="project" value="UniProtKB-UniRule"/>
</dbReference>
<dbReference type="GO" id="GO:0048038">
    <property type="term" value="F:quinone binding"/>
    <property type="evidence" value="ECO:0007669"/>
    <property type="project" value="UniProtKB-KW"/>
</dbReference>
<dbReference type="GO" id="GO:0009060">
    <property type="term" value="P:aerobic respiration"/>
    <property type="evidence" value="ECO:0007669"/>
    <property type="project" value="TreeGrafter"/>
</dbReference>
<dbReference type="FunFam" id="3.30.70.3270:FF:000001">
    <property type="entry name" value="NADH-quinone oxidoreductase subunit I 1"/>
    <property type="match status" value="1"/>
</dbReference>
<dbReference type="Gene3D" id="3.30.70.3270">
    <property type="match status" value="1"/>
</dbReference>
<dbReference type="HAMAP" id="MF_01351">
    <property type="entry name" value="NDH1_NuoI"/>
    <property type="match status" value="1"/>
</dbReference>
<dbReference type="InterPro" id="IPR017896">
    <property type="entry name" value="4Fe4S_Fe-S-bd"/>
</dbReference>
<dbReference type="InterPro" id="IPR017900">
    <property type="entry name" value="4Fe4S_Fe_S_CS"/>
</dbReference>
<dbReference type="InterPro" id="IPR010226">
    <property type="entry name" value="NADH_quinone_OxRdtase_chainI"/>
</dbReference>
<dbReference type="NCBIfam" id="TIGR01971">
    <property type="entry name" value="NuoI"/>
    <property type="match status" value="1"/>
</dbReference>
<dbReference type="NCBIfam" id="NF004538">
    <property type="entry name" value="PRK05888.1-4"/>
    <property type="match status" value="1"/>
</dbReference>
<dbReference type="NCBIfam" id="NF004539">
    <property type="entry name" value="PRK05888.1-5"/>
    <property type="match status" value="1"/>
</dbReference>
<dbReference type="PANTHER" id="PTHR10849:SF20">
    <property type="entry name" value="NADH DEHYDROGENASE [UBIQUINONE] IRON-SULFUR PROTEIN 8, MITOCHONDRIAL"/>
    <property type="match status" value="1"/>
</dbReference>
<dbReference type="PANTHER" id="PTHR10849">
    <property type="entry name" value="NADH DEHYDROGENASE UBIQUINONE IRON-SULFUR PROTEIN 8, MITOCHONDRIAL"/>
    <property type="match status" value="1"/>
</dbReference>
<dbReference type="Pfam" id="PF12838">
    <property type="entry name" value="Fer4_7"/>
    <property type="match status" value="1"/>
</dbReference>
<dbReference type="SUPFAM" id="SSF54862">
    <property type="entry name" value="4Fe-4S ferredoxins"/>
    <property type="match status" value="1"/>
</dbReference>
<dbReference type="PROSITE" id="PS00198">
    <property type="entry name" value="4FE4S_FER_1"/>
    <property type="match status" value="2"/>
</dbReference>
<dbReference type="PROSITE" id="PS51379">
    <property type="entry name" value="4FE4S_FER_2"/>
    <property type="match status" value="2"/>
</dbReference>
<accession>Q0C1D6</accession>
<sequence length="161" mass="18578">MSLAQTLRGALLTDFMGAAWIAVREMFRRKATVNYPFEKNPLSPRFRGEHVLRRYPSGEERCIACKLCEAICPAQAITIEAEPREDGARRTTRYDIDMVKCIYCGFCQEACPVDAIVEGPNFEFATETREELFYDKERLLANGDRWERLIAKNLELDAPYR</sequence>
<comment type="function">
    <text evidence="1">NDH-1 shuttles electrons from NADH, via FMN and iron-sulfur (Fe-S) centers, to quinones in the respiratory chain. The immediate electron acceptor for the enzyme in this species is believed to be ubiquinone. Couples the redox reaction to proton translocation (for every two electrons transferred, four hydrogen ions are translocated across the cytoplasmic membrane), and thus conserves the redox energy in a proton gradient.</text>
</comment>
<comment type="catalytic activity">
    <reaction evidence="1">
        <text>a quinone + NADH + 5 H(+)(in) = a quinol + NAD(+) + 4 H(+)(out)</text>
        <dbReference type="Rhea" id="RHEA:57888"/>
        <dbReference type="ChEBI" id="CHEBI:15378"/>
        <dbReference type="ChEBI" id="CHEBI:24646"/>
        <dbReference type="ChEBI" id="CHEBI:57540"/>
        <dbReference type="ChEBI" id="CHEBI:57945"/>
        <dbReference type="ChEBI" id="CHEBI:132124"/>
    </reaction>
</comment>
<comment type="cofactor">
    <cofactor evidence="1">
        <name>[4Fe-4S] cluster</name>
        <dbReference type="ChEBI" id="CHEBI:49883"/>
    </cofactor>
    <text evidence="1">Binds 2 [4Fe-4S] clusters per subunit.</text>
</comment>
<comment type="subunit">
    <text evidence="1">NDH-1 is composed of 14 different subunits. Subunits NuoA, H, J, K, L, M, N constitute the membrane sector of the complex.</text>
</comment>
<comment type="subcellular location">
    <subcellularLocation>
        <location evidence="1">Cell inner membrane</location>
        <topology evidence="1">Peripheral membrane protein</topology>
    </subcellularLocation>
</comment>
<comment type="similarity">
    <text evidence="1">Belongs to the complex I 23 kDa subunit family.</text>
</comment>
<reference key="1">
    <citation type="journal article" date="2006" name="J. Bacteriol.">
        <title>Comparative genomic evidence for a close relationship between the dimorphic prosthecate bacteria Hyphomonas neptunium and Caulobacter crescentus.</title>
        <authorList>
            <person name="Badger J.H."/>
            <person name="Hoover T.R."/>
            <person name="Brun Y.V."/>
            <person name="Weiner R.M."/>
            <person name="Laub M.T."/>
            <person name="Alexandre G."/>
            <person name="Mrazek J."/>
            <person name="Ren Q."/>
            <person name="Paulsen I.T."/>
            <person name="Nelson K.E."/>
            <person name="Khouri H.M."/>
            <person name="Radune D."/>
            <person name="Sosa J."/>
            <person name="Dodson R.J."/>
            <person name="Sullivan S.A."/>
            <person name="Rosovitz M.J."/>
            <person name="Madupu R."/>
            <person name="Brinkac L.M."/>
            <person name="Durkin A.S."/>
            <person name="Daugherty S.C."/>
            <person name="Kothari S.P."/>
            <person name="Giglio M.G."/>
            <person name="Zhou L."/>
            <person name="Haft D.H."/>
            <person name="Selengut J.D."/>
            <person name="Davidsen T.M."/>
            <person name="Yang Q."/>
            <person name="Zafar N."/>
            <person name="Ward N.L."/>
        </authorList>
    </citation>
    <scope>NUCLEOTIDE SEQUENCE [LARGE SCALE GENOMIC DNA]</scope>
    <source>
        <strain>ATCC 15444</strain>
    </source>
</reference>
<proteinExistence type="inferred from homology"/>
<feature type="chain" id="PRO_0000298504" description="NADH-quinone oxidoreductase subunit I">
    <location>
        <begin position="1"/>
        <end position="161"/>
    </location>
</feature>
<feature type="domain" description="4Fe-4S ferredoxin-type 1" evidence="1">
    <location>
        <begin position="53"/>
        <end position="82"/>
    </location>
</feature>
<feature type="domain" description="4Fe-4S ferredoxin-type 2" evidence="1">
    <location>
        <begin position="92"/>
        <end position="121"/>
    </location>
</feature>
<feature type="binding site" evidence="1">
    <location>
        <position position="62"/>
    </location>
    <ligand>
        <name>[4Fe-4S] cluster</name>
        <dbReference type="ChEBI" id="CHEBI:49883"/>
        <label>1</label>
    </ligand>
</feature>
<feature type="binding site" evidence="1">
    <location>
        <position position="65"/>
    </location>
    <ligand>
        <name>[4Fe-4S] cluster</name>
        <dbReference type="ChEBI" id="CHEBI:49883"/>
        <label>1</label>
    </ligand>
</feature>
<feature type="binding site" evidence="1">
    <location>
        <position position="68"/>
    </location>
    <ligand>
        <name>[4Fe-4S] cluster</name>
        <dbReference type="ChEBI" id="CHEBI:49883"/>
        <label>1</label>
    </ligand>
</feature>
<feature type="binding site" evidence="1">
    <location>
        <position position="72"/>
    </location>
    <ligand>
        <name>[4Fe-4S] cluster</name>
        <dbReference type="ChEBI" id="CHEBI:49883"/>
        <label>2</label>
    </ligand>
</feature>
<feature type="binding site" evidence="1">
    <location>
        <position position="101"/>
    </location>
    <ligand>
        <name>[4Fe-4S] cluster</name>
        <dbReference type="ChEBI" id="CHEBI:49883"/>
        <label>2</label>
    </ligand>
</feature>
<feature type="binding site" evidence="1">
    <location>
        <position position="104"/>
    </location>
    <ligand>
        <name>[4Fe-4S] cluster</name>
        <dbReference type="ChEBI" id="CHEBI:49883"/>
        <label>2</label>
    </ligand>
</feature>
<feature type="binding site" evidence="1">
    <location>
        <position position="107"/>
    </location>
    <ligand>
        <name>[4Fe-4S] cluster</name>
        <dbReference type="ChEBI" id="CHEBI:49883"/>
        <label>2</label>
    </ligand>
</feature>
<feature type="binding site" evidence="1">
    <location>
        <position position="111"/>
    </location>
    <ligand>
        <name>[4Fe-4S] cluster</name>
        <dbReference type="ChEBI" id="CHEBI:49883"/>
        <label>1</label>
    </ligand>
</feature>
<gene>
    <name evidence="1" type="primary">nuoI</name>
    <name type="ordered locus">HNE_1753</name>
</gene>
<organism>
    <name type="scientific">Hyphomonas neptunium (strain ATCC 15444)</name>
    <dbReference type="NCBI Taxonomy" id="228405"/>
    <lineage>
        <taxon>Bacteria</taxon>
        <taxon>Pseudomonadati</taxon>
        <taxon>Pseudomonadota</taxon>
        <taxon>Alphaproteobacteria</taxon>
        <taxon>Hyphomonadales</taxon>
        <taxon>Hyphomonadaceae</taxon>
        <taxon>Hyphomonas</taxon>
    </lineage>
</organism>
<keyword id="KW-0004">4Fe-4S</keyword>
<keyword id="KW-0997">Cell inner membrane</keyword>
<keyword id="KW-1003">Cell membrane</keyword>
<keyword id="KW-0408">Iron</keyword>
<keyword id="KW-0411">Iron-sulfur</keyword>
<keyword id="KW-0472">Membrane</keyword>
<keyword id="KW-0479">Metal-binding</keyword>
<keyword id="KW-0520">NAD</keyword>
<keyword id="KW-0874">Quinone</keyword>
<keyword id="KW-1185">Reference proteome</keyword>
<keyword id="KW-0677">Repeat</keyword>
<keyword id="KW-1278">Translocase</keyword>
<keyword id="KW-0830">Ubiquinone</keyword>